<accession>Q137R8</accession>
<reference key="1">
    <citation type="submission" date="2006-03" db="EMBL/GenBank/DDBJ databases">
        <title>Complete sequence of Rhodopseudomonas palustris BisB5.</title>
        <authorList>
            <consortium name="US DOE Joint Genome Institute"/>
            <person name="Copeland A."/>
            <person name="Lucas S."/>
            <person name="Lapidus A."/>
            <person name="Barry K."/>
            <person name="Detter J.C."/>
            <person name="Glavina del Rio T."/>
            <person name="Hammon N."/>
            <person name="Israni S."/>
            <person name="Dalin E."/>
            <person name="Tice H."/>
            <person name="Pitluck S."/>
            <person name="Chain P."/>
            <person name="Malfatti S."/>
            <person name="Shin M."/>
            <person name="Vergez L."/>
            <person name="Schmutz J."/>
            <person name="Larimer F."/>
            <person name="Land M."/>
            <person name="Hauser L."/>
            <person name="Pelletier D.A."/>
            <person name="Kyrpides N."/>
            <person name="Lykidis A."/>
            <person name="Oda Y."/>
            <person name="Harwood C.S."/>
            <person name="Richardson P."/>
        </authorList>
    </citation>
    <scope>NUCLEOTIDE SEQUENCE [LARGE SCALE GENOMIC DNA]</scope>
    <source>
        <strain>BisB5</strain>
    </source>
</reference>
<proteinExistence type="inferred from homology"/>
<dbReference type="EMBL" id="CP000283">
    <property type="protein sequence ID" value="ABE39671.1"/>
    <property type="molecule type" value="Genomic_DNA"/>
</dbReference>
<dbReference type="SMR" id="Q137R8"/>
<dbReference type="STRING" id="316057.RPD_2441"/>
<dbReference type="KEGG" id="rpd:RPD_2441"/>
<dbReference type="eggNOG" id="COG1301">
    <property type="taxonomic scope" value="Bacteria"/>
</dbReference>
<dbReference type="HOGENOM" id="CLU_019375_7_0_5"/>
<dbReference type="BioCyc" id="RPAL316057:RPD_RS12245-MONOMER"/>
<dbReference type="Proteomes" id="UP000001818">
    <property type="component" value="Chromosome"/>
</dbReference>
<dbReference type="GO" id="GO:0005886">
    <property type="term" value="C:plasma membrane"/>
    <property type="evidence" value="ECO:0007669"/>
    <property type="project" value="UniProtKB-SubCell"/>
</dbReference>
<dbReference type="GO" id="GO:0015138">
    <property type="term" value="F:fumarate transmembrane transporter activity"/>
    <property type="evidence" value="ECO:0007669"/>
    <property type="project" value="TreeGrafter"/>
</dbReference>
<dbReference type="GO" id="GO:0015366">
    <property type="term" value="F:malate:proton symporter activity"/>
    <property type="evidence" value="ECO:0007669"/>
    <property type="project" value="TreeGrafter"/>
</dbReference>
<dbReference type="GO" id="GO:0015141">
    <property type="term" value="F:succinate transmembrane transporter activity"/>
    <property type="evidence" value="ECO:0007669"/>
    <property type="project" value="TreeGrafter"/>
</dbReference>
<dbReference type="GO" id="GO:0070778">
    <property type="term" value="P:L-aspartate transmembrane transport"/>
    <property type="evidence" value="ECO:0007669"/>
    <property type="project" value="TreeGrafter"/>
</dbReference>
<dbReference type="FunFam" id="1.10.3860.10:FF:000001">
    <property type="entry name" value="C4-dicarboxylate transport protein"/>
    <property type="match status" value="1"/>
</dbReference>
<dbReference type="Gene3D" id="1.10.3860.10">
    <property type="entry name" value="Sodium:dicarboxylate symporter"/>
    <property type="match status" value="1"/>
</dbReference>
<dbReference type="HAMAP" id="MF_01300">
    <property type="entry name" value="C4_dicarb_transport"/>
    <property type="match status" value="1"/>
</dbReference>
<dbReference type="InterPro" id="IPR023954">
    <property type="entry name" value="C4_dicarb_transport"/>
</dbReference>
<dbReference type="InterPro" id="IPR001991">
    <property type="entry name" value="Na-dicarboxylate_symporter"/>
</dbReference>
<dbReference type="InterPro" id="IPR018107">
    <property type="entry name" value="Na-dicarboxylate_symporter_CS"/>
</dbReference>
<dbReference type="InterPro" id="IPR036458">
    <property type="entry name" value="Na:dicarbo_symporter_sf"/>
</dbReference>
<dbReference type="NCBIfam" id="NF002461">
    <property type="entry name" value="PRK01663.1"/>
    <property type="match status" value="1"/>
</dbReference>
<dbReference type="PANTHER" id="PTHR42865:SF1">
    <property type="entry name" value="AEROBIC C4-DICARBOXYLATE TRANSPORT PROTEIN"/>
    <property type="match status" value="1"/>
</dbReference>
<dbReference type="PANTHER" id="PTHR42865">
    <property type="entry name" value="PROTON/GLUTAMATE-ASPARTATE SYMPORTER"/>
    <property type="match status" value="1"/>
</dbReference>
<dbReference type="Pfam" id="PF00375">
    <property type="entry name" value="SDF"/>
    <property type="match status" value="1"/>
</dbReference>
<dbReference type="PRINTS" id="PR00173">
    <property type="entry name" value="EDTRNSPORT"/>
</dbReference>
<dbReference type="SUPFAM" id="SSF118215">
    <property type="entry name" value="Proton glutamate symport protein"/>
    <property type="match status" value="1"/>
</dbReference>
<dbReference type="PROSITE" id="PS00714">
    <property type="entry name" value="NA_DICARBOXYL_SYMP_2"/>
    <property type="match status" value="1"/>
</dbReference>
<protein>
    <recommendedName>
        <fullName evidence="1">C4-dicarboxylate transport protein</fullName>
    </recommendedName>
</protein>
<feature type="chain" id="PRO_0000322000" description="C4-dicarboxylate transport protein">
    <location>
        <begin position="1"/>
        <end position="445"/>
    </location>
</feature>
<feature type="transmembrane region" description="Helical" evidence="1">
    <location>
        <begin position="24"/>
        <end position="44"/>
    </location>
</feature>
<feature type="transmembrane region" description="Helical" evidence="1">
    <location>
        <begin position="62"/>
        <end position="82"/>
    </location>
</feature>
<feature type="transmembrane region" description="Helical" evidence="1">
    <location>
        <begin position="105"/>
        <end position="125"/>
    </location>
</feature>
<feature type="transmembrane region" description="Helical" evidence="1">
    <location>
        <begin position="163"/>
        <end position="183"/>
    </location>
</feature>
<feature type="transmembrane region" description="Helical" evidence="1">
    <location>
        <begin position="201"/>
        <end position="221"/>
    </location>
</feature>
<feature type="transmembrane region" description="Helical" evidence="1">
    <location>
        <begin position="237"/>
        <end position="257"/>
    </location>
</feature>
<feature type="transmembrane region" description="Helical" evidence="1">
    <location>
        <begin position="322"/>
        <end position="342"/>
    </location>
</feature>
<feature type="transmembrane region" description="Helical" evidence="1">
    <location>
        <begin position="370"/>
        <end position="390"/>
    </location>
</feature>
<comment type="function">
    <text evidence="1">Responsible for the transport of dicarboxylates such as succinate, fumarate, and malate from the periplasm across the membrane.</text>
</comment>
<comment type="subcellular location">
    <subcellularLocation>
        <location evidence="1">Cell inner membrane</location>
        <topology evidence="1">Multi-pass membrane protein</topology>
    </subcellularLocation>
</comment>
<comment type="similarity">
    <text evidence="1">Belongs to the dicarboxylate/amino acid:cation symporter (DAACS) (TC 2.A.23) family.</text>
</comment>
<sequence>MSTMTDIGASGALHRTRSKPWYKVLYVQVLIAIVLGVLLGWVSPHLATNPWIKALGDGFVKLIKMVIAPIIFCTVVSGIAHIQDARKVGRVGVKALLYFEVVSSFALILGLIVGNLVPVGHGLAAKPDAGAVAKYVDQASHMSSVDFFLNIIPESVVGAFAKGDILQVLLFAILFGFALMALGERGHRLRDVIDDTAHAVFGVIAIVMKAAPVGAFGAMAFTIGKYGPAALGNLIGLVALFYATAALFVFVVLGLIAKFVGFNIFRFVGYIKDELLIVLGTSSSESALPQLMEKLERLGCSKSVVGLVVPTGYSFNLDGTNIYMTLATLFIAQALGIELTFTEQVTILLVAMLTSKGASGVTGAGFVTLAGTLAAVNPALVPGMAIVFSIDKFMSEVRALTNITGNGVATVFVSWWEGELDHDRLQANLNRTIDPSDVETAITTG</sequence>
<keyword id="KW-0997">Cell inner membrane</keyword>
<keyword id="KW-1003">Cell membrane</keyword>
<keyword id="KW-0472">Membrane</keyword>
<keyword id="KW-0769">Symport</keyword>
<keyword id="KW-0812">Transmembrane</keyword>
<keyword id="KW-1133">Transmembrane helix</keyword>
<keyword id="KW-0813">Transport</keyword>
<name>DCTA_RHOPS</name>
<organism>
    <name type="scientific">Rhodopseudomonas palustris (strain BisB5)</name>
    <dbReference type="NCBI Taxonomy" id="316057"/>
    <lineage>
        <taxon>Bacteria</taxon>
        <taxon>Pseudomonadati</taxon>
        <taxon>Pseudomonadota</taxon>
        <taxon>Alphaproteobacteria</taxon>
        <taxon>Hyphomicrobiales</taxon>
        <taxon>Nitrobacteraceae</taxon>
        <taxon>Rhodopseudomonas</taxon>
    </lineage>
</organism>
<gene>
    <name evidence="1" type="primary">dctA</name>
    <name type="ordered locus">RPD_2441</name>
</gene>
<evidence type="ECO:0000255" key="1">
    <source>
        <dbReference type="HAMAP-Rule" id="MF_01300"/>
    </source>
</evidence>